<keyword id="KW-0472">Membrane</keyword>
<keyword id="KW-0479">Metal-binding</keyword>
<keyword id="KW-1267">Proteomics identification</keyword>
<keyword id="KW-1185">Reference proteome</keyword>
<keyword id="KW-0732">Signal</keyword>
<keyword id="KW-0812">Transmembrane</keyword>
<keyword id="KW-1133">Transmembrane helix</keyword>
<sequence>MGSHESLGPYFLVFLLLLLLPPPLFRAGSLRYHGPDWRIFHRLALGSRRAHHHHGPGWRQHWRQGQAGHRCQGSFDLYFILDKSGSVNNNWIDLYMWVEETVARFQSPNIRMCFITYSTDGQTVLPLTSDKNRIKNGLDQLQKIVPDGHTFMQAGFRKAIQQIESFNSGNKVPSMIIAMTDGELVAHAFQDTLREAQKARKLGANVYTLGVADYNLDQITAIADSPGHVFAVENGFKALRSTIDALTSKVCLDVTSVEPSSECVGEPYHVVIHGNGFQNLKKRDEVICRFIFNESTIIDEKPTSIDNNSMNCPGPKLEKPGEEYSIEVSLNKGKTFFKSNVSITSTTCGIFRNWLYFVPLLLLVPLLLCCVWRLCRKQTVKEPPPVQKPEKEPEQEKPPSPPPPPPPPPPPLPPPPPAPVNTCPTVIICCCGCQGVGGMRRIEGNLDTFCDLSHASCHQVPWMCCQSRDQGRYLSLALAQSQYAQAPCCPRICFPHSQECLSLPQAPCSPRMCLRHSRECLALKQARCSPNICLRHSQHSRECLARKQAPCSPRICLRHSPEYFSQAQTLCNPKSCLQPSRECLPLTCSSRCRLPPARCLRPPSRMLPLLSPLLRHTAEPPLSLPPSEPNF</sequence>
<protein>
    <recommendedName>
        <fullName>Anthrax toxin receptor-like</fullName>
    </recommendedName>
</protein>
<evidence type="ECO:0000250" key="1"/>
<evidence type="ECO:0000255" key="2"/>
<evidence type="ECO:0000255" key="3">
    <source>
        <dbReference type="PROSITE-ProRule" id="PRU00219"/>
    </source>
</evidence>
<evidence type="ECO:0000256" key="4">
    <source>
        <dbReference type="SAM" id="MobiDB-lite"/>
    </source>
</evidence>
<evidence type="ECO:0000305" key="5"/>
<comment type="subcellular location">
    <subcellularLocation>
        <location evidence="5">Membrane</location>
        <topology evidence="5">Single-pass type I membrane protein</topology>
    </subcellularLocation>
</comment>
<comment type="similarity">
    <text evidence="5">Belongs to the ATR family.</text>
</comment>
<reference key="1">
    <citation type="journal article" date="2004" name="Nature">
        <title>The DNA sequence and comparative analysis of human chromosome 10.</title>
        <authorList>
            <person name="Deloukas P."/>
            <person name="Earthrowl M.E."/>
            <person name="Grafham D.V."/>
            <person name="Rubenfield M."/>
            <person name="French L."/>
            <person name="Steward C.A."/>
            <person name="Sims S.K."/>
            <person name="Jones M.C."/>
            <person name="Searle S."/>
            <person name="Scott C."/>
            <person name="Howe K."/>
            <person name="Hunt S.E."/>
            <person name="Andrews T.D."/>
            <person name="Gilbert J.G.R."/>
            <person name="Swarbreck D."/>
            <person name="Ashurst J.L."/>
            <person name="Taylor A."/>
            <person name="Battles J."/>
            <person name="Bird C.P."/>
            <person name="Ainscough R."/>
            <person name="Almeida J.P."/>
            <person name="Ashwell R.I.S."/>
            <person name="Ambrose K.D."/>
            <person name="Babbage A.K."/>
            <person name="Bagguley C.L."/>
            <person name="Bailey J."/>
            <person name="Banerjee R."/>
            <person name="Bates K."/>
            <person name="Beasley H."/>
            <person name="Bray-Allen S."/>
            <person name="Brown A.J."/>
            <person name="Brown J.Y."/>
            <person name="Burford D.C."/>
            <person name="Burrill W."/>
            <person name="Burton J."/>
            <person name="Cahill P."/>
            <person name="Camire D."/>
            <person name="Carter N.P."/>
            <person name="Chapman J.C."/>
            <person name="Clark S.Y."/>
            <person name="Clarke G."/>
            <person name="Clee C.M."/>
            <person name="Clegg S."/>
            <person name="Corby N."/>
            <person name="Coulson A."/>
            <person name="Dhami P."/>
            <person name="Dutta I."/>
            <person name="Dunn M."/>
            <person name="Faulkner L."/>
            <person name="Frankish A."/>
            <person name="Frankland J.A."/>
            <person name="Garner P."/>
            <person name="Garnett J."/>
            <person name="Gribble S."/>
            <person name="Griffiths C."/>
            <person name="Grocock R."/>
            <person name="Gustafson E."/>
            <person name="Hammond S."/>
            <person name="Harley J.L."/>
            <person name="Hart E."/>
            <person name="Heath P.D."/>
            <person name="Ho T.P."/>
            <person name="Hopkins B."/>
            <person name="Horne J."/>
            <person name="Howden P.J."/>
            <person name="Huckle E."/>
            <person name="Hynds C."/>
            <person name="Johnson C."/>
            <person name="Johnson D."/>
            <person name="Kana A."/>
            <person name="Kay M."/>
            <person name="Kimberley A.M."/>
            <person name="Kershaw J.K."/>
            <person name="Kokkinaki M."/>
            <person name="Laird G.K."/>
            <person name="Lawlor S."/>
            <person name="Lee H.M."/>
            <person name="Leongamornlert D.A."/>
            <person name="Laird G."/>
            <person name="Lloyd C."/>
            <person name="Lloyd D.M."/>
            <person name="Loveland J."/>
            <person name="Lovell J."/>
            <person name="McLaren S."/>
            <person name="McLay K.E."/>
            <person name="McMurray A."/>
            <person name="Mashreghi-Mohammadi M."/>
            <person name="Matthews L."/>
            <person name="Milne S."/>
            <person name="Nickerson T."/>
            <person name="Nguyen M."/>
            <person name="Overton-Larty E."/>
            <person name="Palmer S.A."/>
            <person name="Pearce A.V."/>
            <person name="Peck A.I."/>
            <person name="Pelan S."/>
            <person name="Phillimore B."/>
            <person name="Porter K."/>
            <person name="Rice C.M."/>
            <person name="Rogosin A."/>
            <person name="Ross M.T."/>
            <person name="Sarafidou T."/>
            <person name="Sehra H.K."/>
            <person name="Shownkeen R."/>
            <person name="Skuce C.D."/>
            <person name="Smith M."/>
            <person name="Standring L."/>
            <person name="Sycamore N."/>
            <person name="Tester J."/>
            <person name="Thorpe A."/>
            <person name="Torcasso W."/>
            <person name="Tracey A."/>
            <person name="Tromans A."/>
            <person name="Tsolas J."/>
            <person name="Wall M."/>
            <person name="Walsh J."/>
            <person name="Wang H."/>
            <person name="Weinstock K."/>
            <person name="West A.P."/>
            <person name="Willey D.L."/>
            <person name="Whitehead S.L."/>
            <person name="Wilming L."/>
            <person name="Wray P.W."/>
            <person name="Young L."/>
            <person name="Chen Y."/>
            <person name="Lovering R.C."/>
            <person name="Moschonas N.K."/>
            <person name="Siebert R."/>
            <person name="Fechtel K."/>
            <person name="Bentley D."/>
            <person name="Durbin R.M."/>
            <person name="Hubbard T."/>
            <person name="Doucette-Stamm L."/>
            <person name="Beck S."/>
            <person name="Smith D.R."/>
            <person name="Rogers J."/>
        </authorList>
    </citation>
    <scope>NUCLEOTIDE SEQUENCE [LARGE SCALE GENOMIC DNA]</scope>
</reference>
<organism>
    <name type="scientific">Homo sapiens</name>
    <name type="common">Human</name>
    <dbReference type="NCBI Taxonomy" id="9606"/>
    <lineage>
        <taxon>Eukaryota</taxon>
        <taxon>Metazoa</taxon>
        <taxon>Chordata</taxon>
        <taxon>Craniata</taxon>
        <taxon>Vertebrata</taxon>
        <taxon>Euteleostomi</taxon>
        <taxon>Mammalia</taxon>
        <taxon>Eutheria</taxon>
        <taxon>Euarchontoglires</taxon>
        <taxon>Primates</taxon>
        <taxon>Haplorrhini</taxon>
        <taxon>Catarrhini</taxon>
        <taxon>Hominidae</taxon>
        <taxon>Homo</taxon>
    </lineage>
</organism>
<gene>
    <name type="primary">ANTXRL</name>
</gene>
<name>ANTRL_HUMAN</name>
<proteinExistence type="evidence at protein level"/>
<dbReference type="EMBL" id="AL450388">
    <property type="status" value="NOT_ANNOTATED_CDS"/>
    <property type="molecule type" value="Genomic_DNA"/>
</dbReference>
<dbReference type="EMBL" id="AL603965">
    <property type="status" value="NOT_ANNOTATED_CDS"/>
    <property type="molecule type" value="Genomic_DNA"/>
</dbReference>
<dbReference type="CCDS" id="CCDS60524.1"/>
<dbReference type="RefSeq" id="NP_001265617.1">
    <property type="nucleotide sequence ID" value="NM_001278688.3"/>
</dbReference>
<dbReference type="SMR" id="A6NF34"/>
<dbReference type="FunCoup" id="A6NF34">
    <property type="interactions" value="2"/>
</dbReference>
<dbReference type="STRING" id="9606.ENSP00000480615"/>
<dbReference type="iPTMnet" id="A6NF34"/>
<dbReference type="PhosphoSitePlus" id="A6NF34"/>
<dbReference type="BioMuta" id="ANTXRL"/>
<dbReference type="MassIVE" id="A6NF34"/>
<dbReference type="PaxDb" id="9606-ENSP00000480615"/>
<dbReference type="PeptideAtlas" id="A6NF34"/>
<dbReference type="ProteomicsDB" id="1025"/>
<dbReference type="ProteomicsDB" id="41578"/>
<dbReference type="Antibodypedia" id="75200">
    <property type="antibodies" value="2 antibodies from 2 providers"/>
</dbReference>
<dbReference type="DNASU" id="195977"/>
<dbReference type="Ensembl" id="ENST00000620264.5">
    <property type="protein sequence ID" value="ENSP00000480615.1"/>
    <property type="gene ID" value="ENSG00000274209.7"/>
</dbReference>
<dbReference type="GeneID" id="195977"/>
<dbReference type="KEGG" id="hsa:195977"/>
<dbReference type="MANE-Select" id="ENST00000620264.5">
    <property type="protein sequence ID" value="ENSP00000480615.1"/>
    <property type="RefSeq nucleotide sequence ID" value="NM_001278688.3"/>
    <property type="RefSeq protein sequence ID" value="NP_001265617.1"/>
</dbReference>
<dbReference type="UCSC" id="uc031wet.2">
    <property type="organism name" value="human"/>
</dbReference>
<dbReference type="AGR" id="HGNC:27277"/>
<dbReference type="CTD" id="195977"/>
<dbReference type="GeneCards" id="ANTXRL"/>
<dbReference type="HGNC" id="HGNC:27277">
    <property type="gene designation" value="ANTXRL"/>
</dbReference>
<dbReference type="HPA" id="ENSG00000274209">
    <property type="expression patterns" value="Tissue enriched (testis)"/>
</dbReference>
<dbReference type="neXtProt" id="NX_A6NF34"/>
<dbReference type="OpenTargets" id="ENSG00000274209"/>
<dbReference type="VEuPathDB" id="HostDB:ENSG00000274209"/>
<dbReference type="eggNOG" id="ENOG502QSKR">
    <property type="taxonomic scope" value="Eukaryota"/>
</dbReference>
<dbReference type="GeneTree" id="ENSGT00940000157727"/>
<dbReference type="InParanoid" id="A6NF34"/>
<dbReference type="OMA" id="LLLCCTW"/>
<dbReference type="OrthoDB" id="9634661at2759"/>
<dbReference type="PAN-GO" id="A6NF34">
    <property type="GO annotations" value="4 GO annotations based on evolutionary models"/>
</dbReference>
<dbReference type="PhylomeDB" id="A6NF34"/>
<dbReference type="TreeFam" id="TF328943"/>
<dbReference type="PathwayCommons" id="A6NF34"/>
<dbReference type="BioGRID-ORCS" id="195977">
    <property type="hits" value="36 hits in 984 CRISPR screens"/>
</dbReference>
<dbReference type="GenomeRNAi" id="195977"/>
<dbReference type="Pharos" id="A6NF34">
    <property type="development level" value="Tdark"/>
</dbReference>
<dbReference type="PRO" id="PR:A6NF34"/>
<dbReference type="Proteomes" id="UP000005640">
    <property type="component" value="Chromosome 10"/>
</dbReference>
<dbReference type="RNAct" id="A6NF34">
    <property type="molecule type" value="protein"/>
</dbReference>
<dbReference type="Bgee" id="ENSG00000274209">
    <property type="expression patterns" value="Expressed in right testis and 80 other cell types or tissues"/>
</dbReference>
<dbReference type="ExpressionAtlas" id="A6NF34">
    <property type="expression patterns" value="baseline and differential"/>
</dbReference>
<dbReference type="GO" id="GO:0009986">
    <property type="term" value="C:cell surface"/>
    <property type="evidence" value="ECO:0000318"/>
    <property type="project" value="GO_Central"/>
</dbReference>
<dbReference type="GO" id="GO:0005886">
    <property type="term" value="C:plasma membrane"/>
    <property type="evidence" value="ECO:0000318"/>
    <property type="project" value="GO_Central"/>
</dbReference>
<dbReference type="GO" id="GO:0046872">
    <property type="term" value="F:metal ion binding"/>
    <property type="evidence" value="ECO:0007669"/>
    <property type="project" value="UniProtKB-KW"/>
</dbReference>
<dbReference type="GO" id="GO:0004888">
    <property type="term" value="F:transmembrane signaling receptor activity"/>
    <property type="evidence" value="ECO:0000318"/>
    <property type="project" value="GO_Central"/>
</dbReference>
<dbReference type="FunFam" id="3.40.50.410:FF:000024">
    <property type="entry name" value="Anthrax toxin receptor"/>
    <property type="match status" value="1"/>
</dbReference>
<dbReference type="Gene3D" id="3.40.50.410">
    <property type="entry name" value="von Willebrand factor, type A domain"/>
    <property type="match status" value="1"/>
</dbReference>
<dbReference type="InterPro" id="IPR008400">
    <property type="entry name" value="Anthrax_toxin_rcpt_extracel"/>
</dbReference>
<dbReference type="InterPro" id="IPR002035">
    <property type="entry name" value="VWF_A"/>
</dbReference>
<dbReference type="InterPro" id="IPR036465">
    <property type="entry name" value="vWFA_dom_sf"/>
</dbReference>
<dbReference type="PANTHER" id="PTHR16059">
    <property type="entry name" value="ANTHRAX TOXIN RECEPTOR"/>
    <property type="match status" value="1"/>
</dbReference>
<dbReference type="PANTHER" id="PTHR16059:SF16">
    <property type="entry name" value="ANTHRAX TOXIN RECEPTOR-LIKE"/>
    <property type="match status" value="1"/>
</dbReference>
<dbReference type="Pfam" id="PF05587">
    <property type="entry name" value="Anth_Ig"/>
    <property type="match status" value="1"/>
</dbReference>
<dbReference type="Pfam" id="PF00092">
    <property type="entry name" value="VWA"/>
    <property type="match status" value="1"/>
</dbReference>
<dbReference type="SMART" id="SM00327">
    <property type="entry name" value="VWA"/>
    <property type="match status" value="1"/>
</dbReference>
<dbReference type="SUPFAM" id="SSF53300">
    <property type="entry name" value="vWA-like"/>
    <property type="match status" value="1"/>
</dbReference>
<dbReference type="PROSITE" id="PS50234">
    <property type="entry name" value="VWFA"/>
    <property type="match status" value="1"/>
</dbReference>
<feature type="signal peptide" evidence="2">
    <location>
        <begin position="1"/>
        <end position="27"/>
    </location>
</feature>
<feature type="chain" id="PRO_0000332166" description="Anthrax toxin receptor-like">
    <location>
        <begin position="28"/>
        <end position="631"/>
    </location>
</feature>
<feature type="topological domain" description="Extracellular" evidence="2">
    <location>
        <begin position="28"/>
        <end position="353"/>
    </location>
</feature>
<feature type="transmembrane region" description="Helical" evidence="2">
    <location>
        <begin position="354"/>
        <end position="374"/>
    </location>
</feature>
<feature type="topological domain" description="Cytoplasmic" evidence="2">
    <location>
        <begin position="375"/>
        <end position="631"/>
    </location>
</feature>
<feature type="domain" description="VWFA" evidence="3">
    <location>
        <begin position="76"/>
        <end position="246"/>
    </location>
</feature>
<feature type="region of interest" description="Disordered" evidence="4">
    <location>
        <begin position="382"/>
        <end position="413"/>
    </location>
</feature>
<feature type="compositionally biased region" description="Basic and acidic residues" evidence="4">
    <location>
        <begin position="388"/>
        <end position="397"/>
    </location>
</feature>
<feature type="compositionally biased region" description="Pro residues" evidence="4">
    <location>
        <begin position="398"/>
        <end position="413"/>
    </location>
</feature>
<feature type="binding site" evidence="1">
    <location>
        <position position="84"/>
    </location>
    <ligand>
        <name>a divalent metal cation</name>
        <dbReference type="ChEBI" id="CHEBI:60240"/>
    </ligand>
</feature>
<feature type="binding site" evidence="1">
    <location>
        <position position="86"/>
    </location>
    <ligand>
        <name>a divalent metal cation</name>
        <dbReference type="ChEBI" id="CHEBI:60240"/>
    </ligand>
</feature>
<feature type="binding site" evidence="1">
    <location>
        <position position="150"/>
    </location>
    <ligand>
        <name>a divalent metal cation</name>
        <dbReference type="ChEBI" id="CHEBI:60240"/>
    </ligand>
</feature>
<feature type="sequence variant" id="VAR_042963" description="In dbSNP:rs1554967247.">
    <original>P</original>
    <variation>R</variation>
    <location>
        <position position="550"/>
    </location>
</feature>
<accession>A6NF34</accession>
<accession>H3BPS2</accession>